<comment type="function">
    <text evidence="1">Removes maltotriose and maltotetraose chains that are attached by 1,6-alpha-linkage to the limit dextrin main chain, generating a debranched limit dextrin.</text>
</comment>
<comment type="catalytic activity">
    <reaction evidence="1">
        <text>Hydrolysis of (1-&gt;6)-alpha-D-glucosidic linkages to branches with degrees of polymerization of three or four glucose residues in limit dextrin.</text>
        <dbReference type="EC" id="3.2.1.196"/>
    </reaction>
</comment>
<comment type="pathway">
    <text evidence="1">Glycan degradation; glycogen degradation.</text>
</comment>
<comment type="similarity">
    <text evidence="1">Belongs to the glycosyl hydrolase 13 family.</text>
</comment>
<reference key="1">
    <citation type="journal article" date="2008" name="Genome Res.">
        <title>Comparative genome analysis of Salmonella enteritidis PT4 and Salmonella gallinarum 287/91 provides insights into evolutionary and host adaptation pathways.</title>
        <authorList>
            <person name="Thomson N.R."/>
            <person name="Clayton D.J."/>
            <person name="Windhorst D."/>
            <person name="Vernikos G."/>
            <person name="Davidson S."/>
            <person name="Churcher C."/>
            <person name="Quail M.A."/>
            <person name="Stevens M."/>
            <person name="Jones M.A."/>
            <person name="Watson M."/>
            <person name="Barron A."/>
            <person name="Layton A."/>
            <person name="Pickard D."/>
            <person name="Kingsley R.A."/>
            <person name="Bignell A."/>
            <person name="Clark L."/>
            <person name="Harris B."/>
            <person name="Ormond D."/>
            <person name="Abdellah Z."/>
            <person name="Brooks K."/>
            <person name="Cherevach I."/>
            <person name="Chillingworth T."/>
            <person name="Woodward J."/>
            <person name="Norberczak H."/>
            <person name="Lord A."/>
            <person name="Arrowsmith C."/>
            <person name="Jagels K."/>
            <person name="Moule S."/>
            <person name="Mungall K."/>
            <person name="Saunders M."/>
            <person name="Whitehead S."/>
            <person name="Chabalgoity J.A."/>
            <person name="Maskell D."/>
            <person name="Humphreys T."/>
            <person name="Roberts M."/>
            <person name="Barrow P.A."/>
            <person name="Dougan G."/>
            <person name="Parkhill J."/>
        </authorList>
    </citation>
    <scope>NUCLEOTIDE SEQUENCE [LARGE SCALE GENOMIC DNA]</scope>
    <source>
        <strain>287/91 / NCTC 13346</strain>
    </source>
</reference>
<sequence>MTQLAIGEATPHGATYDGHGVNFTLFSAHAERVELCVFDSRGNERRYDLPGRRGDVWHGYLAGARPGLRYGYRVHGPWQPVQGHRFNPAKLLLDPYARRVEGELKDHPLLHGGHDEPDYRDNAAVAPKSVVISDHYDWEDDAAPRTPWGKTVIYEAHVKGLTYLHPELPQEIRGTYKALGHPVMVAYFKQLGITALELLPVAQFASEPRLQRMGLTNYWGYNPMAMFALHPAWASSPEMALDEFRDAVKALHRAGIEVILDIVLNHSAELDLDGPTFSLRGIDNRSYYWIRDDGDYHNWTGCGNTLNLSHPGVVEYACECLRYWVETCHVDGFRFDLASVMGRTPTFRQDAPLFAAIKACPVLSTVKLIAEPWDIGEGGYQVGNFPPPFAEWNDHFRDAARRFWLPRNLTTGEFACRFAASSDVFKRNGRAPGASVNLLTAHDGFTLRDCVCFNQKHNEANGEENRDGTNSNYSDNNGKEGLGGPLDLMERRRDSIHALLATLLLSQGTPMLLAGDEHGHSQHGNNNAYCQDNALTWLDWQQANRGLTTFTAALIRLRQQIPALTGNSWWEEGDGNVRWLNKNAQPLSADEWQNGPKLMQILLSDRFLIAINATLEVTDIVLPEGEWRAVPPFAGEDNPVITAVWQGPAHGLCVFQRG</sequence>
<protein>
    <recommendedName>
        <fullName evidence="1">Glycogen debranching enzyme</fullName>
        <ecNumber evidence="1">3.2.1.196</ecNumber>
    </recommendedName>
    <alternativeName>
        <fullName evidence="1">Limit dextrin alpha-1,6-maltotetraose-hydrolase</fullName>
    </alternativeName>
</protein>
<organism>
    <name type="scientific">Salmonella gallinarum (strain 287/91 / NCTC 13346)</name>
    <dbReference type="NCBI Taxonomy" id="550538"/>
    <lineage>
        <taxon>Bacteria</taxon>
        <taxon>Pseudomonadati</taxon>
        <taxon>Pseudomonadota</taxon>
        <taxon>Gammaproteobacteria</taxon>
        <taxon>Enterobacterales</taxon>
        <taxon>Enterobacteriaceae</taxon>
        <taxon>Salmonella</taxon>
    </lineage>
</organism>
<name>GLGX_SALG2</name>
<gene>
    <name evidence="1" type="primary">glgX</name>
    <name type="ordered locus">SG3900</name>
</gene>
<dbReference type="EC" id="3.2.1.196" evidence="1"/>
<dbReference type="EMBL" id="AM933173">
    <property type="protein sequence ID" value="CAR39675.1"/>
    <property type="molecule type" value="Genomic_DNA"/>
</dbReference>
<dbReference type="RefSeq" id="WP_000192497.1">
    <property type="nucleotide sequence ID" value="NC_011274.1"/>
</dbReference>
<dbReference type="SMR" id="B5R7H8"/>
<dbReference type="CAZy" id="CBM48">
    <property type="family name" value="Carbohydrate-Binding Module Family 48"/>
</dbReference>
<dbReference type="CAZy" id="GH13">
    <property type="family name" value="Glycoside Hydrolase Family 13"/>
</dbReference>
<dbReference type="KEGG" id="seg:SG3900"/>
<dbReference type="HOGENOM" id="CLU_011725_1_1_6"/>
<dbReference type="UniPathway" id="UPA00165"/>
<dbReference type="Proteomes" id="UP000008321">
    <property type="component" value="Chromosome"/>
</dbReference>
<dbReference type="GO" id="GO:0004133">
    <property type="term" value="F:glycogen debranching enzyme activity"/>
    <property type="evidence" value="ECO:0007669"/>
    <property type="project" value="UniProtKB-UniRule"/>
</dbReference>
<dbReference type="GO" id="GO:0004553">
    <property type="term" value="F:hydrolase activity, hydrolyzing O-glycosyl compounds"/>
    <property type="evidence" value="ECO:0007669"/>
    <property type="project" value="InterPro"/>
</dbReference>
<dbReference type="GO" id="GO:0005980">
    <property type="term" value="P:glycogen catabolic process"/>
    <property type="evidence" value="ECO:0007669"/>
    <property type="project" value="UniProtKB-UniRule"/>
</dbReference>
<dbReference type="CDD" id="cd11326">
    <property type="entry name" value="AmyAc_Glg_debranch"/>
    <property type="match status" value="1"/>
</dbReference>
<dbReference type="CDD" id="cd02856">
    <property type="entry name" value="E_set_GDE_Isoamylase_N"/>
    <property type="match status" value="1"/>
</dbReference>
<dbReference type="FunFam" id="2.60.40.10:FF:000468">
    <property type="entry name" value="Glycogen debranching enzyme"/>
    <property type="match status" value="1"/>
</dbReference>
<dbReference type="Gene3D" id="3.20.20.80">
    <property type="entry name" value="Glycosidases"/>
    <property type="match status" value="1"/>
</dbReference>
<dbReference type="Gene3D" id="2.60.40.1180">
    <property type="entry name" value="Golgi alpha-mannosidase II"/>
    <property type="match status" value="1"/>
</dbReference>
<dbReference type="Gene3D" id="2.60.40.10">
    <property type="entry name" value="Immunoglobulins"/>
    <property type="match status" value="1"/>
</dbReference>
<dbReference type="HAMAP" id="MF_01248">
    <property type="entry name" value="GlgX"/>
    <property type="match status" value="1"/>
</dbReference>
<dbReference type="InterPro" id="IPR040784">
    <property type="entry name" value="GlgX_C"/>
</dbReference>
<dbReference type="InterPro" id="IPR044505">
    <property type="entry name" value="GlgX_Isoamylase_N_E_set"/>
</dbReference>
<dbReference type="InterPro" id="IPR006047">
    <property type="entry name" value="Glyco_hydro_13_cat_dom"/>
</dbReference>
<dbReference type="InterPro" id="IPR004193">
    <property type="entry name" value="Glyco_hydro_13_N"/>
</dbReference>
<dbReference type="InterPro" id="IPR013780">
    <property type="entry name" value="Glyco_hydro_b"/>
</dbReference>
<dbReference type="InterPro" id="IPR022844">
    <property type="entry name" value="Glycogen_debranch_bac"/>
</dbReference>
<dbReference type="InterPro" id="IPR011837">
    <property type="entry name" value="Glycogen_debranch_GlgX"/>
</dbReference>
<dbReference type="InterPro" id="IPR017853">
    <property type="entry name" value="Glycoside_hydrolase_SF"/>
</dbReference>
<dbReference type="InterPro" id="IPR013783">
    <property type="entry name" value="Ig-like_fold"/>
</dbReference>
<dbReference type="InterPro" id="IPR014756">
    <property type="entry name" value="Ig_E-set"/>
</dbReference>
<dbReference type="NCBIfam" id="TIGR02100">
    <property type="entry name" value="glgX_debranch"/>
    <property type="match status" value="1"/>
</dbReference>
<dbReference type="NCBIfam" id="NF002983">
    <property type="entry name" value="PRK03705.1"/>
    <property type="match status" value="1"/>
</dbReference>
<dbReference type="PANTHER" id="PTHR43002">
    <property type="entry name" value="GLYCOGEN DEBRANCHING ENZYME"/>
    <property type="match status" value="1"/>
</dbReference>
<dbReference type="Pfam" id="PF02922">
    <property type="entry name" value="CBM_48"/>
    <property type="match status" value="1"/>
</dbReference>
<dbReference type="Pfam" id="PF18390">
    <property type="entry name" value="GlgX_C"/>
    <property type="match status" value="1"/>
</dbReference>
<dbReference type="SMART" id="SM00642">
    <property type="entry name" value="Aamy"/>
    <property type="match status" value="1"/>
</dbReference>
<dbReference type="SUPFAM" id="SSF51445">
    <property type="entry name" value="(Trans)glycosidases"/>
    <property type="match status" value="1"/>
</dbReference>
<dbReference type="SUPFAM" id="SSF81296">
    <property type="entry name" value="E set domains"/>
    <property type="match status" value="1"/>
</dbReference>
<evidence type="ECO:0000255" key="1">
    <source>
        <dbReference type="HAMAP-Rule" id="MF_01248"/>
    </source>
</evidence>
<evidence type="ECO:0000256" key="2">
    <source>
        <dbReference type="SAM" id="MobiDB-lite"/>
    </source>
</evidence>
<proteinExistence type="inferred from homology"/>
<keyword id="KW-0119">Carbohydrate metabolism</keyword>
<keyword id="KW-0321">Glycogen metabolism</keyword>
<keyword id="KW-0326">Glycosidase</keyword>
<keyword id="KW-0378">Hydrolase</keyword>
<feature type="chain" id="PRO_1000139875" description="Glycogen debranching enzyme">
    <location>
        <begin position="1"/>
        <end position="658"/>
    </location>
</feature>
<feature type="region of interest" description="Disordered" evidence="2">
    <location>
        <begin position="459"/>
        <end position="486"/>
    </location>
</feature>
<feature type="active site" description="Nucleophile" evidence="1">
    <location>
        <position position="336"/>
    </location>
</feature>
<feature type="active site" description="Proton donor" evidence="1">
    <location>
        <position position="371"/>
    </location>
</feature>
<feature type="site" description="Transition state stabilizer" evidence="1">
    <location>
        <position position="443"/>
    </location>
</feature>
<accession>B5R7H8</accession>